<proteinExistence type="inferred from homology"/>
<protein>
    <recommendedName>
        <fullName evidence="1">Large ribosomal subunit protein uL14c</fullName>
    </recommendedName>
    <alternativeName>
        <fullName evidence="2">50S ribosomal protein L14, chloroplastic</fullName>
    </alternativeName>
</protein>
<sequence>MIRPQSYLNVADNTGARKVMCIRVLGGIQGQTANIGDVIIAVVKDALPNTGVKKSDIVRAVVVRTRKGIRRENGMFIRFEDNAAVVINKEGNPRGTRIFGPVARELRDRNFTKIVSLAPEVL</sequence>
<organism>
    <name type="scientific">Stigeoclonium helveticum</name>
    <name type="common">Green alga</name>
    <dbReference type="NCBI Taxonomy" id="55999"/>
    <lineage>
        <taxon>Eukaryota</taxon>
        <taxon>Viridiplantae</taxon>
        <taxon>Chlorophyta</taxon>
        <taxon>core chlorophytes</taxon>
        <taxon>Chlorophyceae</taxon>
        <taxon>OCC clade</taxon>
        <taxon>Chaetophorales</taxon>
        <taxon>Chaetophoraceae</taxon>
        <taxon>Stigeoclonium</taxon>
    </lineage>
</organism>
<accession>Q06SH0</accession>
<reference key="1">
    <citation type="journal article" date="2006" name="Mol. Genet. Genomics">
        <title>Distinctive architecture of the chloroplast genome in the chlorophycean green alga Stigeoclonium helveticum.</title>
        <authorList>
            <person name="Belanger A.-S."/>
            <person name="Brouard J.-S."/>
            <person name="Charlebois P."/>
            <person name="Otis C."/>
            <person name="Lemieux C."/>
            <person name="Turmel M."/>
        </authorList>
    </citation>
    <scope>NUCLEOTIDE SEQUENCE [LARGE SCALE GENOMIC DNA]</scope>
    <source>
        <strain>UTEX 441</strain>
    </source>
</reference>
<feature type="chain" id="PRO_0000276369" description="Large ribosomal subunit protein uL14c">
    <location>
        <begin position="1"/>
        <end position="122"/>
    </location>
</feature>
<dbReference type="EMBL" id="DQ630521">
    <property type="protein sequence ID" value="ABF60181.1"/>
    <property type="molecule type" value="Genomic_DNA"/>
</dbReference>
<dbReference type="RefSeq" id="YP_764396.1">
    <property type="nucleotide sequence ID" value="NC_008372.1"/>
</dbReference>
<dbReference type="SMR" id="Q06SH0"/>
<dbReference type="GeneID" id="4308361"/>
<dbReference type="GO" id="GO:0009507">
    <property type="term" value="C:chloroplast"/>
    <property type="evidence" value="ECO:0007669"/>
    <property type="project" value="UniProtKB-SubCell"/>
</dbReference>
<dbReference type="GO" id="GO:0022625">
    <property type="term" value="C:cytosolic large ribosomal subunit"/>
    <property type="evidence" value="ECO:0007669"/>
    <property type="project" value="TreeGrafter"/>
</dbReference>
<dbReference type="GO" id="GO:0070180">
    <property type="term" value="F:large ribosomal subunit rRNA binding"/>
    <property type="evidence" value="ECO:0007669"/>
    <property type="project" value="TreeGrafter"/>
</dbReference>
<dbReference type="GO" id="GO:0003735">
    <property type="term" value="F:structural constituent of ribosome"/>
    <property type="evidence" value="ECO:0007669"/>
    <property type="project" value="InterPro"/>
</dbReference>
<dbReference type="GO" id="GO:0006412">
    <property type="term" value="P:translation"/>
    <property type="evidence" value="ECO:0007669"/>
    <property type="project" value="UniProtKB-UniRule"/>
</dbReference>
<dbReference type="CDD" id="cd00337">
    <property type="entry name" value="Ribosomal_uL14"/>
    <property type="match status" value="1"/>
</dbReference>
<dbReference type="FunFam" id="2.40.150.20:FF:000001">
    <property type="entry name" value="50S ribosomal protein L14"/>
    <property type="match status" value="1"/>
</dbReference>
<dbReference type="Gene3D" id="2.40.150.20">
    <property type="entry name" value="Ribosomal protein L14"/>
    <property type="match status" value="1"/>
</dbReference>
<dbReference type="HAMAP" id="MF_01367">
    <property type="entry name" value="Ribosomal_uL14"/>
    <property type="match status" value="1"/>
</dbReference>
<dbReference type="InterPro" id="IPR000218">
    <property type="entry name" value="Ribosomal_uL14"/>
</dbReference>
<dbReference type="InterPro" id="IPR005745">
    <property type="entry name" value="Ribosomal_uL14_bac-type"/>
</dbReference>
<dbReference type="InterPro" id="IPR019972">
    <property type="entry name" value="Ribosomal_uL14_CS"/>
</dbReference>
<dbReference type="InterPro" id="IPR036853">
    <property type="entry name" value="Ribosomal_uL14_sf"/>
</dbReference>
<dbReference type="NCBIfam" id="TIGR01067">
    <property type="entry name" value="rplN_bact"/>
    <property type="match status" value="1"/>
</dbReference>
<dbReference type="PANTHER" id="PTHR11761">
    <property type="entry name" value="50S/60S RIBOSOMAL PROTEIN L14/L23"/>
    <property type="match status" value="1"/>
</dbReference>
<dbReference type="PANTHER" id="PTHR11761:SF3">
    <property type="entry name" value="LARGE RIBOSOMAL SUBUNIT PROTEIN UL14M"/>
    <property type="match status" value="1"/>
</dbReference>
<dbReference type="Pfam" id="PF00238">
    <property type="entry name" value="Ribosomal_L14"/>
    <property type="match status" value="1"/>
</dbReference>
<dbReference type="SMART" id="SM01374">
    <property type="entry name" value="Ribosomal_L14"/>
    <property type="match status" value="1"/>
</dbReference>
<dbReference type="SUPFAM" id="SSF50193">
    <property type="entry name" value="Ribosomal protein L14"/>
    <property type="match status" value="1"/>
</dbReference>
<dbReference type="PROSITE" id="PS00049">
    <property type="entry name" value="RIBOSOMAL_L14"/>
    <property type="match status" value="1"/>
</dbReference>
<gene>
    <name evidence="1" type="primary">rpl14</name>
</gene>
<geneLocation type="chloroplast"/>
<name>RK14_STIHE</name>
<keyword id="KW-0150">Chloroplast</keyword>
<keyword id="KW-0934">Plastid</keyword>
<keyword id="KW-0687">Ribonucleoprotein</keyword>
<keyword id="KW-0689">Ribosomal protein</keyword>
<keyword id="KW-0694">RNA-binding</keyword>
<keyword id="KW-0699">rRNA-binding</keyword>
<comment type="function">
    <text evidence="1">Binds to 23S rRNA.</text>
</comment>
<comment type="subunit">
    <text evidence="1">Part of the 50S ribosomal subunit.</text>
</comment>
<comment type="subcellular location">
    <subcellularLocation>
        <location>Plastid</location>
        <location>Chloroplast</location>
    </subcellularLocation>
</comment>
<comment type="similarity">
    <text evidence="1">Belongs to the universal ribosomal protein uL14 family.</text>
</comment>
<evidence type="ECO:0000255" key="1">
    <source>
        <dbReference type="HAMAP-Rule" id="MF_01367"/>
    </source>
</evidence>
<evidence type="ECO:0000305" key="2"/>